<accession>B3DP22</accession>
<evidence type="ECO:0000255" key="1">
    <source>
        <dbReference type="HAMAP-Rule" id="MF_00377"/>
    </source>
</evidence>
<gene>
    <name evidence="1" type="primary">dnaA</name>
    <name type="ordered locus">BLD_1436</name>
</gene>
<dbReference type="EMBL" id="CP000605">
    <property type="protein sequence ID" value="ACD98881.1"/>
    <property type="molecule type" value="Genomic_DNA"/>
</dbReference>
<dbReference type="RefSeq" id="WP_007051767.1">
    <property type="nucleotide sequence ID" value="NC_010816.1"/>
</dbReference>
<dbReference type="SMR" id="B3DP22"/>
<dbReference type="GeneID" id="69577253"/>
<dbReference type="KEGG" id="blj:BLD_1436"/>
<dbReference type="HOGENOM" id="CLU_026910_2_2_11"/>
<dbReference type="Proteomes" id="UP000002419">
    <property type="component" value="Chromosome"/>
</dbReference>
<dbReference type="GO" id="GO:0005737">
    <property type="term" value="C:cytoplasm"/>
    <property type="evidence" value="ECO:0007669"/>
    <property type="project" value="UniProtKB-SubCell"/>
</dbReference>
<dbReference type="GO" id="GO:0005886">
    <property type="term" value="C:plasma membrane"/>
    <property type="evidence" value="ECO:0007669"/>
    <property type="project" value="TreeGrafter"/>
</dbReference>
<dbReference type="GO" id="GO:0005524">
    <property type="term" value="F:ATP binding"/>
    <property type="evidence" value="ECO:0007669"/>
    <property type="project" value="UniProtKB-UniRule"/>
</dbReference>
<dbReference type="GO" id="GO:0016887">
    <property type="term" value="F:ATP hydrolysis activity"/>
    <property type="evidence" value="ECO:0007669"/>
    <property type="project" value="InterPro"/>
</dbReference>
<dbReference type="GO" id="GO:0003688">
    <property type="term" value="F:DNA replication origin binding"/>
    <property type="evidence" value="ECO:0007669"/>
    <property type="project" value="UniProtKB-UniRule"/>
</dbReference>
<dbReference type="GO" id="GO:0008289">
    <property type="term" value="F:lipid binding"/>
    <property type="evidence" value="ECO:0007669"/>
    <property type="project" value="UniProtKB-KW"/>
</dbReference>
<dbReference type="GO" id="GO:0006270">
    <property type="term" value="P:DNA replication initiation"/>
    <property type="evidence" value="ECO:0007669"/>
    <property type="project" value="UniProtKB-UniRule"/>
</dbReference>
<dbReference type="GO" id="GO:0006275">
    <property type="term" value="P:regulation of DNA replication"/>
    <property type="evidence" value="ECO:0007669"/>
    <property type="project" value="UniProtKB-UniRule"/>
</dbReference>
<dbReference type="CDD" id="cd00009">
    <property type="entry name" value="AAA"/>
    <property type="match status" value="1"/>
</dbReference>
<dbReference type="CDD" id="cd06571">
    <property type="entry name" value="Bac_DnaA_C"/>
    <property type="match status" value="1"/>
</dbReference>
<dbReference type="FunFam" id="3.40.50.300:FF:000668">
    <property type="entry name" value="Chromosomal replication initiator protein DnaA"/>
    <property type="match status" value="1"/>
</dbReference>
<dbReference type="Gene3D" id="1.10.1750.10">
    <property type="match status" value="1"/>
</dbReference>
<dbReference type="Gene3D" id="1.10.8.60">
    <property type="match status" value="1"/>
</dbReference>
<dbReference type="Gene3D" id="3.40.50.300">
    <property type="entry name" value="P-loop containing nucleotide triphosphate hydrolases"/>
    <property type="match status" value="1"/>
</dbReference>
<dbReference type="HAMAP" id="MF_00377">
    <property type="entry name" value="DnaA_bact"/>
    <property type="match status" value="1"/>
</dbReference>
<dbReference type="InterPro" id="IPR003593">
    <property type="entry name" value="AAA+_ATPase"/>
</dbReference>
<dbReference type="InterPro" id="IPR001957">
    <property type="entry name" value="Chromosome_initiator_DnaA"/>
</dbReference>
<dbReference type="InterPro" id="IPR020591">
    <property type="entry name" value="Chromosome_initiator_DnaA-like"/>
</dbReference>
<dbReference type="InterPro" id="IPR018312">
    <property type="entry name" value="Chromosome_initiator_DnaA_CS"/>
</dbReference>
<dbReference type="InterPro" id="IPR013159">
    <property type="entry name" value="DnaA_C"/>
</dbReference>
<dbReference type="InterPro" id="IPR013317">
    <property type="entry name" value="DnaA_dom"/>
</dbReference>
<dbReference type="InterPro" id="IPR027417">
    <property type="entry name" value="P-loop_NTPase"/>
</dbReference>
<dbReference type="InterPro" id="IPR010921">
    <property type="entry name" value="Trp_repressor/repl_initiator"/>
</dbReference>
<dbReference type="NCBIfam" id="TIGR00362">
    <property type="entry name" value="DnaA"/>
    <property type="match status" value="1"/>
</dbReference>
<dbReference type="PANTHER" id="PTHR30050">
    <property type="entry name" value="CHROMOSOMAL REPLICATION INITIATOR PROTEIN DNAA"/>
    <property type="match status" value="1"/>
</dbReference>
<dbReference type="PANTHER" id="PTHR30050:SF2">
    <property type="entry name" value="CHROMOSOMAL REPLICATION INITIATOR PROTEIN DNAA"/>
    <property type="match status" value="1"/>
</dbReference>
<dbReference type="Pfam" id="PF00308">
    <property type="entry name" value="Bac_DnaA"/>
    <property type="match status" value="1"/>
</dbReference>
<dbReference type="Pfam" id="PF08299">
    <property type="entry name" value="Bac_DnaA_C"/>
    <property type="match status" value="1"/>
</dbReference>
<dbReference type="PRINTS" id="PR00051">
    <property type="entry name" value="DNAA"/>
</dbReference>
<dbReference type="SMART" id="SM00382">
    <property type="entry name" value="AAA"/>
    <property type="match status" value="1"/>
</dbReference>
<dbReference type="SMART" id="SM00760">
    <property type="entry name" value="Bac_DnaA_C"/>
    <property type="match status" value="1"/>
</dbReference>
<dbReference type="SUPFAM" id="SSF52540">
    <property type="entry name" value="P-loop containing nucleoside triphosphate hydrolases"/>
    <property type="match status" value="1"/>
</dbReference>
<dbReference type="SUPFAM" id="SSF48295">
    <property type="entry name" value="TrpR-like"/>
    <property type="match status" value="1"/>
</dbReference>
<dbReference type="PROSITE" id="PS01008">
    <property type="entry name" value="DNAA"/>
    <property type="match status" value="1"/>
</dbReference>
<comment type="function">
    <text evidence="1">Plays an essential role in the initiation and regulation of chromosomal replication. ATP-DnaA binds to the origin of replication (oriC) to initiate formation of the DNA replication initiation complex once per cell cycle. Binds the DnaA box (a 9 base pair repeat at the origin) and separates the double-stranded (ds)DNA. Forms a right-handed helical filament on oriC DNA; dsDNA binds to the exterior of the filament while single-stranded (ss)DNA is stabiized in the filament's interior. The ATP-DnaA-oriC complex binds and stabilizes one strand of the AT-rich DNA unwinding element (DUE), permitting loading of DNA polymerase. After initiation quickly degrades to an ADP-DnaA complex that is not apt for DNA replication. Binds acidic phospholipids.</text>
</comment>
<comment type="subunit">
    <text evidence="1">Oligomerizes as a right-handed, spiral filament on DNA at oriC.</text>
</comment>
<comment type="subcellular location">
    <subcellularLocation>
        <location evidence="1">Cytoplasm</location>
    </subcellularLocation>
</comment>
<comment type="domain">
    <text evidence="1">Domain I is involved in oligomerization and binding regulators, domain II is flexibile and of varying length in different bacteria, domain III forms the AAA+ region, while domain IV binds dsDNA.</text>
</comment>
<comment type="similarity">
    <text evidence="1">Belongs to the DnaA family.</text>
</comment>
<proteinExistence type="inferred from homology"/>
<sequence length="500" mass="55309">MVNASGDPVIEAAHIWSDTLTVLKHSASLSPREKGWLEGVVPEGVFGSTIVLCVDNNDTLQAIQGDLNDSLLQALRTVTGENMFPAFKVVPKTEPEPLSEAKPAQPYPSEISPTVAEFGKESYGAKPAAAPREPMPATEPQFPVGQQKMNRDPETHLNKNFTFDSFVPGDSNRFARTVALAVAEGSGQDFNPLCIYGGSGLGKTHLLNAIGNYALVKDPGLKVRYVTSEEFTNEFIDALQNPNQSQGQIAEFNRRYRQVDVLLIDDIQFLGGKEATLDQFFHTFNALHQANKRIVIASDVAPKNLKGFEARLISRFESGLTVDVKPPDLETRIAILRMIASMNGSKIPSDVLDLIAERFTENIRELEGALTRVTAVASLSNQPVTRALAEQTLQDFFTTDVEIKPTDIISQVAKYFHLTFEDLVGKSRTKNVAVPRQIAMYLAREMTSMSLMDIGQVFGGRDHTTVMHACTRISDRMQQKQEIYNYVMELTVRLKQSNTN</sequence>
<reference key="1">
    <citation type="journal article" date="2008" name="BMC Genomics">
        <title>Comparative genomic analysis of the gut bacterium Bifidobacterium longum reveals loci susceptible to deletion during pure culture growth.</title>
        <authorList>
            <person name="Lee J.H."/>
            <person name="Karamychev V.N."/>
            <person name="Kozyavkin S.A."/>
            <person name="Mills D."/>
            <person name="Pavlov A.R."/>
            <person name="Pavlova N.V."/>
            <person name="Polouchine N.N."/>
            <person name="Richardson P.M."/>
            <person name="Shakhova V.V."/>
            <person name="Slesarev A.I."/>
            <person name="Weimer B."/>
            <person name="O'Sullivan D.J."/>
        </authorList>
    </citation>
    <scope>NUCLEOTIDE SEQUENCE [LARGE SCALE GENOMIC DNA]</scope>
    <source>
        <strain>DJO10A</strain>
    </source>
</reference>
<organism>
    <name type="scientific">Bifidobacterium longum (strain DJO10A)</name>
    <dbReference type="NCBI Taxonomy" id="205913"/>
    <lineage>
        <taxon>Bacteria</taxon>
        <taxon>Bacillati</taxon>
        <taxon>Actinomycetota</taxon>
        <taxon>Actinomycetes</taxon>
        <taxon>Bifidobacteriales</taxon>
        <taxon>Bifidobacteriaceae</taxon>
        <taxon>Bifidobacterium</taxon>
    </lineage>
</organism>
<feature type="chain" id="PRO_1000121949" description="Chromosomal replication initiator protein DnaA">
    <location>
        <begin position="1"/>
        <end position="500"/>
    </location>
</feature>
<feature type="region of interest" description="Domain I, interacts with DnaA modulators" evidence="1">
    <location>
        <begin position="1"/>
        <end position="81"/>
    </location>
</feature>
<feature type="region of interest" description="Domain II" evidence="1">
    <location>
        <begin position="81"/>
        <end position="155"/>
    </location>
</feature>
<feature type="region of interest" description="Domain III, AAA+ region" evidence="1">
    <location>
        <begin position="156"/>
        <end position="377"/>
    </location>
</feature>
<feature type="region of interest" description="Domain IV, binds dsDNA" evidence="1">
    <location>
        <begin position="378"/>
        <end position="500"/>
    </location>
</feature>
<feature type="binding site" evidence="1">
    <location>
        <position position="200"/>
    </location>
    <ligand>
        <name>ATP</name>
        <dbReference type="ChEBI" id="CHEBI:30616"/>
    </ligand>
</feature>
<feature type="binding site" evidence="1">
    <location>
        <position position="202"/>
    </location>
    <ligand>
        <name>ATP</name>
        <dbReference type="ChEBI" id="CHEBI:30616"/>
    </ligand>
</feature>
<feature type="binding site" evidence="1">
    <location>
        <position position="203"/>
    </location>
    <ligand>
        <name>ATP</name>
        <dbReference type="ChEBI" id="CHEBI:30616"/>
    </ligand>
</feature>
<feature type="binding site" evidence="1">
    <location>
        <position position="204"/>
    </location>
    <ligand>
        <name>ATP</name>
        <dbReference type="ChEBI" id="CHEBI:30616"/>
    </ligand>
</feature>
<name>DNAA_BIFLD</name>
<protein>
    <recommendedName>
        <fullName evidence="1">Chromosomal replication initiator protein DnaA</fullName>
    </recommendedName>
</protein>
<keyword id="KW-0067">ATP-binding</keyword>
<keyword id="KW-0963">Cytoplasm</keyword>
<keyword id="KW-0235">DNA replication</keyword>
<keyword id="KW-0238">DNA-binding</keyword>
<keyword id="KW-0446">Lipid-binding</keyword>
<keyword id="KW-0547">Nucleotide-binding</keyword>